<keyword id="KW-0002">3D-structure</keyword>
<keyword id="KW-1185">Reference proteome</keyword>
<organismHost>
    <name type="scientific">Saccharolobus solfataricus</name>
    <name type="common">Sulfolobus solfataricus</name>
    <dbReference type="NCBI Taxonomy" id="2287"/>
</organismHost>
<proteinExistence type="evidence at protein level"/>
<accession>P20215</accession>
<gene>
    <name type="ORF">d63</name>
</gene>
<protein>
    <recommendedName>
        <fullName>Protein D-63</fullName>
    </recommendedName>
</protein>
<feature type="chain" id="PRO_0000223031" description="Protein D-63">
    <location>
        <begin position="1"/>
        <end position="63"/>
    </location>
</feature>
<feature type="helix" evidence="2">
    <location>
        <begin position="3"/>
        <end position="34"/>
    </location>
</feature>
<feature type="helix" evidence="2">
    <location>
        <begin position="40"/>
        <end position="63"/>
    </location>
</feature>
<evidence type="ECO:0000269" key="1">
    <source>
    </source>
</evidence>
<evidence type="ECO:0007829" key="2">
    <source>
        <dbReference type="PDB" id="1SKV"/>
    </source>
</evidence>
<reference key="1">
    <citation type="journal article" date="1991" name="Virology">
        <title>Complete nucleotide sequence of the virus SSV1 of the archaebacterium Sulfolobus shibatae.</title>
        <authorList>
            <person name="Palm P."/>
            <person name="Schleper C."/>
            <person name="Grampp B."/>
            <person name="Yeats S."/>
            <person name="McWilliam P."/>
            <person name="Reiter W.-D."/>
            <person name="Zillig W."/>
        </authorList>
    </citation>
    <scope>NUCLEOTIDE SEQUENCE [GENOMIC DNA]</scope>
</reference>
<reference key="2">
    <citation type="journal article" date="2004" name="J. Virol.">
        <title>Structure of D-63 from sulfolobus spindle-shaped virus 1: surface properties of the dimeric four-helix bundle suggest an adaptor protein function.</title>
        <authorList>
            <person name="Kraft P."/>
            <person name="Kummel D."/>
            <person name="Oeckinghaus A."/>
            <person name="Gauss G.H."/>
            <person name="Wiedenheft B."/>
            <person name="Young M."/>
            <person name="Lawrence C.M."/>
        </authorList>
    </citation>
    <scope>X-RAY CRYSTALLOGRAPHY (2.6 ANGSTROMS)</scope>
    <scope>SUBUNIT</scope>
</reference>
<organism>
    <name type="scientific">Sulfolobus spindle-shape virus 1</name>
    <name type="common">SSV1</name>
    <dbReference type="NCBI Taxonomy" id="244589"/>
    <lineage>
        <taxon>Viruses</taxon>
        <taxon>Viruses incertae sedis</taxon>
        <taxon>Fuselloviridae</taxon>
        <taxon>Alphafusellovirus</taxon>
    </lineage>
</organism>
<sequence length="63" mass="7469">MSKEVLEKELFEMLDEDVRELLSLIHEIKIDRITGNMDKQKLGKAYFQVQKIEAELYQLIKVS</sequence>
<name>D63_SSV1</name>
<comment type="function">
    <text>This protein may be involved in virus assembly.</text>
</comment>
<comment type="subunit">
    <text evidence="1">Homodimer.</text>
</comment>
<dbReference type="EMBL" id="X07234">
    <property type="protein sequence ID" value="CAA30219.1"/>
    <property type="molecule type" value="Genomic_DNA"/>
</dbReference>
<dbReference type="PIR" id="S03220">
    <property type="entry name" value="S03220"/>
</dbReference>
<dbReference type="RefSeq" id="NP_039786.1">
    <property type="nucleotide sequence ID" value="NC_001338.1"/>
</dbReference>
<dbReference type="PDB" id="1SKV">
    <property type="method" value="X-ray"/>
    <property type="resolution" value="2.60 A"/>
    <property type="chains" value="A/B/C/D=1-63"/>
</dbReference>
<dbReference type="PDBsum" id="1SKV"/>
<dbReference type="SMR" id="P20215"/>
<dbReference type="KEGG" id="vg:2559643"/>
<dbReference type="OrthoDB" id="27399at10239"/>
<dbReference type="EvolutionaryTrace" id="P20215"/>
<dbReference type="Proteomes" id="UP000000854">
    <property type="component" value="Genome"/>
</dbReference>
<dbReference type="Gene3D" id="1.10.287.660">
    <property type="entry name" value="Helix hairpin bin"/>
    <property type="match status" value="1"/>
</dbReference>
<dbReference type="InterPro" id="IPR037292">
    <property type="entry name" value="D-63_sf"/>
</dbReference>
<dbReference type="InterPro" id="IPR029012">
    <property type="entry name" value="Helix_hairpin_bin_sf"/>
</dbReference>
<dbReference type="InterPro" id="IPR048986">
    <property type="entry name" value="SSV1_D-63"/>
</dbReference>
<dbReference type="Pfam" id="PF20940">
    <property type="entry name" value="SSV1_D-63"/>
    <property type="match status" value="1"/>
</dbReference>
<dbReference type="SUPFAM" id="SSF109801">
    <property type="entry name" value="Hypothetical protein D-63"/>
    <property type="match status" value="1"/>
</dbReference>